<accession>A7MQD6</accession>
<dbReference type="EC" id="3.1.1.96" evidence="1"/>
<dbReference type="EMBL" id="CP000783">
    <property type="protein sequence ID" value="ABU79244.1"/>
    <property type="molecule type" value="Genomic_DNA"/>
</dbReference>
<dbReference type="RefSeq" id="WP_004387705.1">
    <property type="nucleotide sequence ID" value="NC_009778.1"/>
</dbReference>
<dbReference type="SMR" id="A7MQD6"/>
<dbReference type="GeneID" id="56732703"/>
<dbReference type="KEGG" id="esa:ESA_04063"/>
<dbReference type="HOGENOM" id="CLU_076901_1_0_6"/>
<dbReference type="Proteomes" id="UP000000260">
    <property type="component" value="Chromosome"/>
</dbReference>
<dbReference type="GO" id="GO:0005737">
    <property type="term" value="C:cytoplasm"/>
    <property type="evidence" value="ECO:0007669"/>
    <property type="project" value="UniProtKB-SubCell"/>
</dbReference>
<dbReference type="GO" id="GO:0051500">
    <property type="term" value="F:D-tyrosyl-tRNA(Tyr) deacylase activity"/>
    <property type="evidence" value="ECO:0007669"/>
    <property type="project" value="TreeGrafter"/>
</dbReference>
<dbReference type="GO" id="GO:0106026">
    <property type="term" value="F:Gly-tRNA(Ala) deacylase activity"/>
    <property type="evidence" value="ECO:0007669"/>
    <property type="project" value="UniProtKB-UniRule"/>
</dbReference>
<dbReference type="GO" id="GO:0043908">
    <property type="term" value="F:Ser(Gly)-tRNA(Ala) hydrolase activity"/>
    <property type="evidence" value="ECO:0007669"/>
    <property type="project" value="UniProtKB-UniRule"/>
</dbReference>
<dbReference type="GO" id="GO:0000049">
    <property type="term" value="F:tRNA binding"/>
    <property type="evidence" value="ECO:0007669"/>
    <property type="project" value="UniProtKB-UniRule"/>
</dbReference>
<dbReference type="GO" id="GO:0019478">
    <property type="term" value="P:D-amino acid catabolic process"/>
    <property type="evidence" value="ECO:0007669"/>
    <property type="project" value="UniProtKB-UniRule"/>
</dbReference>
<dbReference type="CDD" id="cd00563">
    <property type="entry name" value="Dtyr_deacylase"/>
    <property type="match status" value="1"/>
</dbReference>
<dbReference type="FunFam" id="3.50.80.10:FF:000001">
    <property type="entry name" value="D-aminoacyl-tRNA deacylase"/>
    <property type="match status" value="1"/>
</dbReference>
<dbReference type="Gene3D" id="3.50.80.10">
    <property type="entry name" value="D-tyrosyl-tRNA(Tyr) deacylase"/>
    <property type="match status" value="1"/>
</dbReference>
<dbReference type="HAMAP" id="MF_00518">
    <property type="entry name" value="Deacylase_Dtd"/>
    <property type="match status" value="1"/>
</dbReference>
<dbReference type="InterPro" id="IPR003732">
    <property type="entry name" value="Daa-tRNA_deacyls_DTD"/>
</dbReference>
<dbReference type="InterPro" id="IPR023509">
    <property type="entry name" value="DTD-like_sf"/>
</dbReference>
<dbReference type="NCBIfam" id="TIGR00256">
    <property type="entry name" value="D-aminoacyl-tRNA deacylase"/>
    <property type="match status" value="1"/>
</dbReference>
<dbReference type="PANTHER" id="PTHR10472:SF5">
    <property type="entry name" value="D-AMINOACYL-TRNA DEACYLASE 1"/>
    <property type="match status" value="1"/>
</dbReference>
<dbReference type="PANTHER" id="PTHR10472">
    <property type="entry name" value="D-TYROSYL-TRNA TYR DEACYLASE"/>
    <property type="match status" value="1"/>
</dbReference>
<dbReference type="Pfam" id="PF02580">
    <property type="entry name" value="Tyr_Deacylase"/>
    <property type="match status" value="1"/>
</dbReference>
<dbReference type="SUPFAM" id="SSF69500">
    <property type="entry name" value="DTD-like"/>
    <property type="match status" value="1"/>
</dbReference>
<gene>
    <name evidence="1" type="primary">dtd</name>
    <name type="ordered locus">ESA_04063</name>
</gene>
<reference key="1">
    <citation type="journal article" date="2010" name="PLoS ONE">
        <title>Genome sequence of Cronobacter sakazakii BAA-894 and comparative genomic hybridization analysis with other Cronobacter species.</title>
        <authorList>
            <person name="Kucerova E."/>
            <person name="Clifton S.W."/>
            <person name="Xia X.Q."/>
            <person name="Long F."/>
            <person name="Porwollik S."/>
            <person name="Fulton L."/>
            <person name="Fronick C."/>
            <person name="Minx P."/>
            <person name="Kyung K."/>
            <person name="Warren W."/>
            <person name="Fulton R."/>
            <person name="Feng D."/>
            <person name="Wollam A."/>
            <person name="Shah N."/>
            <person name="Bhonagiri V."/>
            <person name="Nash W.E."/>
            <person name="Hallsworth-Pepin K."/>
            <person name="Wilson R.K."/>
            <person name="McClelland M."/>
            <person name="Forsythe S.J."/>
        </authorList>
    </citation>
    <scope>NUCLEOTIDE SEQUENCE [LARGE SCALE GENOMIC DNA]</scope>
    <source>
        <strain>ATCC BAA-894</strain>
    </source>
</reference>
<proteinExistence type="inferred from homology"/>
<comment type="function">
    <text evidence="1">An aminoacyl-tRNA editing enzyme that deacylates mischarged D-aminoacyl-tRNAs. Also deacylates mischarged glycyl-tRNA(Ala), protecting cells against glycine mischarging by AlaRS. Acts via tRNA-based rather than protein-based catalysis; rejects L-amino acids rather than detecting D-amino acids in the active site. By recycling D-aminoacyl-tRNA to D-amino acids and free tRNA molecules, this enzyme counteracts the toxicity associated with the formation of D-aminoacyl-tRNA entities in vivo and helps enforce protein L-homochirality.</text>
</comment>
<comment type="catalytic activity">
    <reaction evidence="1">
        <text>glycyl-tRNA(Ala) + H2O = tRNA(Ala) + glycine + H(+)</text>
        <dbReference type="Rhea" id="RHEA:53744"/>
        <dbReference type="Rhea" id="RHEA-COMP:9657"/>
        <dbReference type="Rhea" id="RHEA-COMP:13640"/>
        <dbReference type="ChEBI" id="CHEBI:15377"/>
        <dbReference type="ChEBI" id="CHEBI:15378"/>
        <dbReference type="ChEBI" id="CHEBI:57305"/>
        <dbReference type="ChEBI" id="CHEBI:78442"/>
        <dbReference type="ChEBI" id="CHEBI:78522"/>
        <dbReference type="EC" id="3.1.1.96"/>
    </reaction>
</comment>
<comment type="catalytic activity">
    <reaction evidence="1">
        <text>a D-aminoacyl-tRNA + H2O = a tRNA + a D-alpha-amino acid + H(+)</text>
        <dbReference type="Rhea" id="RHEA:13953"/>
        <dbReference type="Rhea" id="RHEA-COMP:10123"/>
        <dbReference type="Rhea" id="RHEA-COMP:10124"/>
        <dbReference type="ChEBI" id="CHEBI:15377"/>
        <dbReference type="ChEBI" id="CHEBI:15378"/>
        <dbReference type="ChEBI" id="CHEBI:59871"/>
        <dbReference type="ChEBI" id="CHEBI:78442"/>
        <dbReference type="ChEBI" id="CHEBI:79333"/>
        <dbReference type="EC" id="3.1.1.96"/>
    </reaction>
</comment>
<comment type="subunit">
    <text evidence="1">Homodimer.</text>
</comment>
<comment type="subcellular location">
    <subcellularLocation>
        <location evidence="1">Cytoplasm</location>
    </subcellularLocation>
</comment>
<comment type="domain">
    <text evidence="1">A Gly-cisPro motif from one monomer fits into the active site of the other monomer to allow specific chiral rejection of L-amino acids.</text>
</comment>
<comment type="similarity">
    <text evidence="1">Belongs to the DTD family.</text>
</comment>
<sequence>MIALIQRVTHASVRVGDEVTGEIGPGLLVLLGVEKDDDEQKANRLCERVLGYRIFSDEQGKMNLNVQQAGGSVLVVSQFTLPADTEKGLRPSFSRGAPPEQAQALYDYFVSRCRAAGMTTETGRFAADMQVSLTNDGPVTFWLQI</sequence>
<organism>
    <name type="scientific">Cronobacter sakazakii (strain ATCC BAA-894)</name>
    <name type="common">Enterobacter sakazakii</name>
    <dbReference type="NCBI Taxonomy" id="290339"/>
    <lineage>
        <taxon>Bacteria</taxon>
        <taxon>Pseudomonadati</taxon>
        <taxon>Pseudomonadota</taxon>
        <taxon>Gammaproteobacteria</taxon>
        <taxon>Enterobacterales</taxon>
        <taxon>Enterobacteriaceae</taxon>
        <taxon>Cronobacter</taxon>
    </lineage>
</organism>
<protein>
    <recommendedName>
        <fullName evidence="1">D-aminoacyl-tRNA deacylase</fullName>
        <shortName evidence="1">DTD</shortName>
        <ecNumber evidence="1">3.1.1.96</ecNumber>
    </recommendedName>
    <alternativeName>
        <fullName evidence="1">Gly-tRNA(Ala) deacylase</fullName>
    </alternativeName>
</protein>
<evidence type="ECO:0000255" key="1">
    <source>
        <dbReference type="HAMAP-Rule" id="MF_00518"/>
    </source>
</evidence>
<name>DTD_CROS8</name>
<keyword id="KW-0963">Cytoplasm</keyword>
<keyword id="KW-0378">Hydrolase</keyword>
<keyword id="KW-1185">Reference proteome</keyword>
<keyword id="KW-0694">RNA-binding</keyword>
<keyword id="KW-0820">tRNA-binding</keyword>
<feature type="chain" id="PRO_1000050832" description="D-aminoacyl-tRNA deacylase">
    <location>
        <begin position="1"/>
        <end position="145"/>
    </location>
</feature>
<feature type="short sequence motif" description="Gly-cisPro motif, important for rejection of L-amino acids" evidence="1">
    <location>
        <begin position="137"/>
        <end position="138"/>
    </location>
</feature>